<gene>
    <name type="primary">clpB</name>
    <name type="ordered locus">EF_2355</name>
</gene>
<dbReference type="EMBL" id="AE016830">
    <property type="protein sequence ID" value="AAO82080.1"/>
    <property type="molecule type" value="Genomic_DNA"/>
</dbReference>
<dbReference type="RefSeq" id="NP_816010.1">
    <property type="nucleotide sequence ID" value="NC_004668.1"/>
</dbReference>
<dbReference type="RefSeq" id="WP_002356811.1">
    <property type="nucleotide sequence ID" value="NZ_KE136528.1"/>
</dbReference>
<dbReference type="SMR" id="Q831Y7"/>
<dbReference type="STRING" id="226185.EF_2355"/>
<dbReference type="EnsemblBacteria" id="AAO82080">
    <property type="protein sequence ID" value="AAO82080"/>
    <property type="gene ID" value="EF_2355"/>
</dbReference>
<dbReference type="KEGG" id="efa:EF2355"/>
<dbReference type="PATRIC" id="fig|226185.45.peg.1180"/>
<dbReference type="eggNOG" id="COG0542">
    <property type="taxonomic scope" value="Bacteria"/>
</dbReference>
<dbReference type="HOGENOM" id="CLU_005070_4_1_9"/>
<dbReference type="Proteomes" id="UP000001415">
    <property type="component" value="Chromosome"/>
</dbReference>
<dbReference type="GO" id="GO:0005737">
    <property type="term" value="C:cytoplasm"/>
    <property type="evidence" value="ECO:0007669"/>
    <property type="project" value="UniProtKB-SubCell"/>
</dbReference>
<dbReference type="GO" id="GO:0005524">
    <property type="term" value="F:ATP binding"/>
    <property type="evidence" value="ECO:0007669"/>
    <property type="project" value="UniProtKB-KW"/>
</dbReference>
<dbReference type="GO" id="GO:0016887">
    <property type="term" value="F:ATP hydrolysis activity"/>
    <property type="evidence" value="ECO:0007669"/>
    <property type="project" value="InterPro"/>
</dbReference>
<dbReference type="GO" id="GO:0034605">
    <property type="term" value="P:cellular response to heat"/>
    <property type="evidence" value="ECO:0007669"/>
    <property type="project" value="TreeGrafter"/>
</dbReference>
<dbReference type="GO" id="GO:0042026">
    <property type="term" value="P:protein refolding"/>
    <property type="evidence" value="ECO:0007669"/>
    <property type="project" value="InterPro"/>
</dbReference>
<dbReference type="CDD" id="cd00009">
    <property type="entry name" value="AAA"/>
    <property type="match status" value="1"/>
</dbReference>
<dbReference type="CDD" id="cd19499">
    <property type="entry name" value="RecA-like_ClpB_Hsp104-like"/>
    <property type="match status" value="1"/>
</dbReference>
<dbReference type="FunFam" id="3.40.50.300:FF:000120">
    <property type="entry name" value="ATP-dependent chaperone ClpB"/>
    <property type="match status" value="1"/>
</dbReference>
<dbReference type="FunFam" id="3.40.50.300:FF:000025">
    <property type="entry name" value="ATP-dependent Clp protease subunit"/>
    <property type="match status" value="1"/>
</dbReference>
<dbReference type="FunFam" id="3.40.50.300:FF:000010">
    <property type="entry name" value="Chaperone clpB 1, putative"/>
    <property type="match status" value="1"/>
</dbReference>
<dbReference type="Gene3D" id="1.10.8.60">
    <property type="match status" value="1"/>
</dbReference>
<dbReference type="Gene3D" id="1.10.1780.10">
    <property type="entry name" value="Clp, N-terminal domain"/>
    <property type="match status" value="1"/>
</dbReference>
<dbReference type="Gene3D" id="3.40.50.300">
    <property type="entry name" value="P-loop containing nucleotide triphosphate hydrolases"/>
    <property type="match status" value="3"/>
</dbReference>
<dbReference type="InterPro" id="IPR003593">
    <property type="entry name" value="AAA+_ATPase"/>
</dbReference>
<dbReference type="InterPro" id="IPR003959">
    <property type="entry name" value="ATPase_AAA_core"/>
</dbReference>
<dbReference type="InterPro" id="IPR017730">
    <property type="entry name" value="Chaperonin_ClpB"/>
</dbReference>
<dbReference type="InterPro" id="IPR019489">
    <property type="entry name" value="Clp_ATPase_C"/>
</dbReference>
<dbReference type="InterPro" id="IPR036628">
    <property type="entry name" value="Clp_N_dom_sf"/>
</dbReference>
<dbReference type="InterPro" id="IPR004176">
    <property type="entry name" value="Clp_R_dom"/>
</dbReference>
<dbReference type="InterPro" id="IPR001270">
    <property type="entry name" value="ClpA/B"/>
</dbReference>
<dbReference type="InterPro" id="IPR018368">
    <property type="entry name" value="ClpA/B_CS1"/>
</dbReference>
<dbReference type="InterPro" id="IPR028299">
    <property type="entry name" value="ClpA/B_CS2"/>
</dbReference>
<dbReference type="InterPro" id="IPR041546">
    <property type="entry name" value="ClpA/ClpB_AAA_lid"/>
</dbReference>
<dbReference type="InterPro" id="IPR050130">
    <property type="entry name" value="ClpA_ClpB"/>
</dbReference>
<dbReference type="InterPro" id="IPR027417">
    <property type="entry name" value="P-loop_NTPase"/>
</dbReference>
<dbReference type="NCBIfam" id="TIGR03346">
    <property type="entry name" value="chaperone_ClpB"/>
    <property type="match status" value="1"/>
</dbReference>
<dbReference type="PANTHER" id="PTHR11638">
    <property type="entry name" value="ATP-DEPENDENT CLP PROTEASE"/>
    <property type="match status" value="1"/>
</dbReference>
<dbReference type="PANTHER" id="PTHR11638:SF18">
    <property type="entry name" value="HEAT SHOCK PROTEIN 104"/>
    <property type="match status" value="1"/>
</dbReference>
<dbReference type="Pfam" id="PF00004">
    <property type="entry name" value="AAA"/>
    <property type="match status" value="1"/>
</dbReference>
<dbReference type="Pfam" id="PF07724">
    <property type="entry name" value="AAA_2"/>
    <property type="match status" value="1"/>
</dbReference>
<dbReference type="Pfam" id="PF17871">
    <property type="entry name" value="AAA_lid_9"/>
    <property type="match status" value="1"/>
</dbReference>
<dbReference type="Pfam" id="PF02861">
    <property type="entry name" value="Clp_N"/>
    <property type="match status" value="2"/>
</dbReference>
<dbReference type="Pfam" id="PF10431">
    <property type="entry name" value="ClpB_D2-small"/>
    <property type="match status" value="1"/>
</dbReference>
<dbReference type="PRINTS" id="PR00300">
    <property type="entry name" value="CLPPROTEASEA"/>
</dbReference>
<dbReference type="SMART" id="SM00382">
    <property type="entry name" value="AAA"/>
    <property type="match status" value="2"/>
</dbReference>
<dbReference type="SMART" id="SM01086">
    <property type="entry name" value="ClpB_D2-small"/>
    <property type="match status" value="1"/>
</dbReference>
<dbReference type="SUPFAM" id="SSF81923">
    <property type="entry name" value="Double Clp-N motif"/>
    <property type="match status" value="1"/>
</dbReference>
<dbReference type="SUPFAM" id="SSF52540">
    <property type="entry name" value="P-loop containing nucleoside triphosphate hydrolases"/>
    <property type="match status" value="2"/>
</dbReference>
<dbReference type="PROSITE" id="PS51903">
    <property type="entry name" value="CLP_R"/>
    <property type="match status" value="1"/>
</dbReference>
<dbReference type="PROSITE" id="PS00870">
    <property type="entry name" value="CLPAB_1"/>
    <property type="match status" value="1"/>
</dbReference>
<dbReference type="PROSITE" id="PS00871">
    <property type="entry name" value="CLPAB_2"/>
    <property type="match status" value="1"/>
</dbReference>
<organism>
    <name type="scientific">Enterococcus faecalis (strain ATCC 700802 / V583)</name>
    <dbReference type="NCBI Taxonomy" id="226185"/>
    <lineage>
        <taxon>Bacteria</taxon>
        <taxon>Bacillati</taxon>
        <taxon>Bacillota</taxon>
        <taxon>Bacilli</taxon>
        <taxon>Lactobacillales</taxon>
        <taxon>Enterococcaceae</taxon>
        <taxon>Enterococcus</taxon>
    </lineage>
</organism>
<feature type="chain" id="PRO_0000191122" description="Chaperone protein ClpB">
    <location>
        <begin position="1"/>
        <end position="868"/>
    </location>
</feature>
<feature type="domain" description="Clp R" evidence="2">
    <location>
        <begin position="3"/>
        <end position="148"/>
    </location>
</feature>
<feature type="region of interest" description="Repeat 1" evidence="2">
    <location>
        <begin position="6"/>
        <end position="70"/>
    </location>
</feature>
<feature type="region of interest" description="Repeat 2" evidence="2">
    <location>
        <begin position="84"/>
        <end position="148"/>
    </location>
</feature>
<feature type="region of interest" description="NBD1" evidence="1">
    <location>
        <begin position="161"/>
        <end position="342"/>
    </location>
</feature>
<feature type="region of interest" description="Linker" evidence="1">
    <location>
        <begin position="343"/>
        <end position="548"/>
    </location>
</feature>
<feature type="region of interest" description="NBD2" evidence="1">
    <location>
        <begin position="558"/>
        <end position="770"/>
    </location>
</feature>
<feature type="region of interest" description="C-terminal" evidence="1">
    <location>
        <begin position="771"/>
        <end position="868"/>
    </location>
</feature>
<feature type="coiled-coil region" evidence="1">
    <location>
        <begin position="393"/>
        <end position="526"/>
    </location>
</feature>
<feature type="binding site" evidence="1">
    <location>
        <begin position="208"/>
        <end position="215"/>
    </location>
    <ligand>
        <name>ATP</name>
        <dbReference type="ChEBI" id="CHEBI:30616"/>
        <label>1</label>
    </ligand>
</feature>
<feature type="binding site" evidence="1">
    <location>
        <begin position="608"/>
        <end position="615"/>
    </location>
    <ligand>
        <name>ATP</name>
        <dbReference type="ChEBI" id="CHEBI:30616"/>
        <label>2</label>
    </ligand>
</feature>
<protein>
    <recommendedName>
        <fullName>Chaperone protein ClpB</fullName>
    </recommendedName>
</protein>
<evidence type="ECO:0000250" key="1"/>
<evidence type="ECO:0000255" key="2">
    <source>
        <dbReference type="PROSITE-ProRule" id="PRU01251"/>
    </source>
</evidence>
<evidence type="ECO:0000305" key="3"/>
<sequence length="868" mass="98071">MNIEKMTTTLQEAIAEAQKVAVTRQHQEIDIAHLWKIFLQPNHFGRNFYTDAGLDVDAFEREVDNALDEYPSVAGGNVQYGQNLSQNLFHLLQEADSLREEFQDEFLSTEIVLLALMKLKNYRLTKYLMQQGITEKELRKNIEEMRGGDRVTSQNQEEQYKALEKYGVDLVQQVKAGKQDPIIGRDEEIRDVIRILSRKTKNNPVLIGEPGVGKTAIVEGLAQRIVRKDVPENLKDKTIFSLDMGALIAGAKFRGEFEERLKAVLKEVKKSDGKIILFIDEIHNIVGAGKTEGSMDAGNLLKPMLARGELHLIGATTLDEYRQYMEKDKALERRFQKVLVKEPTVEDTISILRGLKERFEIHHGVNIHDNALVAAATLSDRYITDRFLPDKAIDLVDEASATIRVEMNSMPTELDQVTRRLMQLEIEEAALKKESDDASKKRLANLQEELADLREEANSMKMQWETEKEEVNAVSNKRAEIDKAKHELEDAENNYDLERAAVLRHGTIPQLEHELKELEEKNAKDNVKMVQESVTENEIAQVVGRLTGIPVTKLVEGEREKLMKLNETLHKRVIGQDEAVDAVSDAVIRSRAGLQDPNRPLGSFLFLGPTGVGKTELAKALAEDLFDSEDHMVRIDMSEYMEKHAVSRLVGAPPGYVGYEEGGQLTEAVRRNPYTIVLLDEIEKAHPDVFNILLQVLDDGRLTDSKGRVVDFKNTVLIMTSNIGSQLLLEGVTPEGTIPEEVENQVMNILKGHFKPEFLNRIDDTILFTPLSLDNVKGIIGKMTAQLAHRLEQQEIVLEITDEAKTWIAENGYEPAYGARPLKRFITREVETPLAKEIVSGRVMPKTKVTISLLDNQLVFENEPIEEV</sequence>
<proteinExistence type="inferred from homology"/>
<reference key="1">
    <citation type="journal article" date="2003" name="Science">
        <title>Role of mobile DNA in the evolution of vancomycin-resistant Enterococcus faecalis.</title>
        <authorList>
            <person name="Paulsen I.T."/>
            <person name="Banerjei L."/>
            <person name="Myers G.S.A."/>
            <person name="Nelson K.E."/>
            <person name="Seshadri R."/>
            <person name="Read T.D."/>
            <person name="Fouts D.E."/>
            <person name="Eisen J.A."/>
            <person name="Gill S.R."/>
            <person name="Heidelberg J.F."/>
            <person name="Tettelin H."/>
            <person name="Dodson R.J."/>
            <person name="Umayam L.A."/>
            <person name="Brinkac L.M."/>
            <person name="Beanan M.J."/>
            <person name="Daugherty S.C."/>
            <person name="DeBoy R.T."/>
            <person name="Durkin S.A."/>
            <person name="Kolonay J.F."/>
            <person name="Madupu R."/>
            <person name="Nelson W.C."/>
            <person name="Vamathevan J.J."/>
            <person name="Tran B."/>
            <person name="Upton J."/>
            <person name="Hansen T."/>
            <person name="Shetty J."/>
            <person name="Khouri H.M."/>
            <person name="Utterback T.R."/>
            <person name="Radune D."/>
            <person name="Ketchum K.A."/>
            <person name="Dougherty B.A."/>
            <person name="Fraser C.M."/>
        </authorList>
    </citation>
    <scope>NUCLEOTIDE SEQUENCE [LARGE SCALE GENOMIC DNA]</scope>
    <source>
        <strain>ATCC 700802 / V583</strain>
    </source>
</reference>
<keyword id="KW-0067">ATP-binding</keyword>
<keyword id="KW-0143">Chaperone</keyword>
<keyword id="KW-0175">Coiled coil</keyword>
<keyword id="KW-0963">Cytoplasm</keyword>
<keyword id="KW-0547">Nucleotide-binding</keyword>
<keyword id="KW-1185">Reference proteome</keyword>
<keyword id="KW-0677">Repeat</keyword>
<keyword id="KW-0346">Stress response</keyword>
<comment type="function">
    <text evidence="1">Part of a stress-induced multi-chaperone system, it is involved in the recovery of the cell from heat-induced damage, in cooperation with DnaK, DnaJ and GrpE. Acts before DnaK, in the processing of protein aggregates. Protein binding stimulates the ATPase activity; ATP hydrolysis unfolds the denatured protein aggregates, which probably helps expose new hydrophobic binding sites on the surface of ClpB-bound aggregates, contributing to the solubilization and refolding of denatured protein aggregates by DnaK (By similarity).</text>
</comment>
<comment type="subunit">
    <text evidence="1">Homohexamer. The oligomerization is ATP-dependent (By similarity).</text>
</comment>
<comment type="subcellular location">
    <subcellularLocation>
        <location evidence="3">Cytoplasm</location>
    </subcellularLocation>
</comment>
<comment type="domain">
    <text evidence="1">The Clp repeat (R) domain probably functions as a substrate-discriminating domain, recruiting aggregated proteins to the ClpB hexamer and/or stabilizing bound proteins. The NBD2 domain is responsible for oligomerization, whereas the NBD1 domain stabilizes the hexamer probably in an ATP-dependent manner. The movement of the coiled-coil domain is essential for ClpB ability to rescue proteins from an aggregated state, probably by pulling apart large aggregated proteins, which are bound between the coiled-coils motifs of adjacent ClpB subunits in the functional hexamer (By similarity).</text>
</comment>
<comment type="similarity">
    <text evidence="3">Belongs to the ClpA/ClpB family.</text>
</comment>
<accession>Q831Y7</accession>
<name>CLPB_ENTFA</name>